<proteinExistence type="inferred from homology"/>
<dbReference type="EMBL" id="CP000931">
    <property type="protein sequence ID" value="ABZ77178.1"/>
    <property type="molecule type" value="Genomic_DNA"/>
</dbReference>
<dbReference type="RefSeq" id="WP_012277706.1">
    <property type="nucleotide sequence ID" value="NC_010334.1"/>
</dbReference>
<dbReference type="STRING" id="458817.Shal_2622"/>
<dbReference type="KEGG" id="shl:Shal_2622"/>
<dbReference type="eggNOG" id="COG2917">
    <property type="taxonomic scope" value="Bacteria"/>
</dbReference>
<dbReference type="HOGENOM" id="CLU_089554_2_0_6"/>
<dbReference type="OrthoDB" id="9788219at2"/>
<dbReference type="Proteomes" id="UP000001317">
    <property type="component" value="Chromosome"/>
</dbReference>
<dbReference type="GO" id="GO:0005886">
    <property type="term" value="C:plasma membrane"/>
    <property type="evidence" value="ECO:0007669"/>
    <property type="project" value="UniProtKB-SubCell"/>
</dbReference>
<dbReference type="HAMAP" id="MF_00189">
    <property type="entry name" value="YciB"/>
    <property type="match status" value="1"/>
</dbReference>
<dbReference type="InterPro" id="IPR006008">
    <property type="entry name" value="YciB"/>
</dbReference>
<dbReference type="NCBIfam" id="TIGR00997">
    <property type="entry name" value="ispZ"/>
    <property type="match status" value="1"/>
</dbReference>
<dbReference type="NCBIfam" id="NF001324">
    <property type="entry name" value="PRK00259.1-2"/>
    <property type="match status" value="1"/>
</dbReference>
<dbReference type="NCBIfam" id="NF001325">
    <property type="entry name" value="PRK00259.1-3"/>
    <property type="match status" value="1"/>
</dbReference>
<dbReference type="PANTHER" id="PTHR36917:SF1">
    <property type="entry name" value="INNER MEMBRANE-SPANNING PROTEIN YCIB"/>
    <property type="match status" value="1"/>
</dbReference>
<dbReference type="PANTHER" id="PTHR36917">
    <property type="entry name" value="INTRACELLULAR SEPTATION PROTEIN A-RELATED"/>
    <property type="match status" value="1"/>
</dbReference>
<dbReference type="Pfam" id="PF04279">
    <property type="entry name" value="IspA"/>
    <property type="match status" value="1"/>
</dbReference>
<sequence>MKQLLDFLPLIIFFAVYKFFDIYVASGALIAATALQLVISYMLYKKLEKMHLITFVMVTVFGSLTLILHDDSFIKWKVTIVYALFAIALGVSQIMNKPLLKSMLGKELIVEDKVWARVTWYWVSFFVVCGLVNIYVAFSLSQETWVNFKVFGLTALTLINTVLTVLYLFKNMSEEDRKELK</sequence>
<keyword id="KW-0997">Cell inner membrane</keyword>
<keyword id="KW-1003">Cell membrane</keyword>
<keyword id="KW-0472">Membrane</keyword>
<keyword id="KW-0812">Transmembrane</keyword>
<keyword id="KW-1133">Transmembrane helix</keyword>
<protein>
    <recommendedName>
        <fullName evidence="1">Inner membrane-spanning protein YciB</fullName>
    </recommendedName>
</protein>
<evidence type="ECO:0000255" key="1">
    <source>
        <dbReference type="HAMAP-Rule" id="MF_00189"/>
    </source>
</evidence>
<organism>
    <name type="scientific">Shewanella halifaxensis (strain HAW-EB4)</name>
    <dbReference type="NCBI Taxonomy" id="458817"/>
    <lineage>
        <taxon>Bacteria</taxon>
        <taxon>Pseudomonadati</taxon>
        <taxon>Pseudomonadota</taxon>
        <taxon>Gammaproteobacteria</taxon>
        <taxon>Alteromonadales</taxon>
        <taxon>Shewanellaceae</taxon>
        <taxon>Shewanella</taxon>
    </lineage>
</organism>
<gene>
    <name evidence="1" type="primary">yciB</name>
    <name type="ordered locus">Shal_2622</name>
</gene>
<accession>B0TKX6</accession>
<feature type="chain" id="PRO_1000077494" description="Inner membrane-spanning protein YciB">
    <location>
        <begin position="1"/>
        <end position="181"/>
    </location>
</feature>
<feature type="transmembrane region" description="Helical" evidence="1">
    <location>
        <begin position="10"/>
        <end position="30"/>
    </location>
</feature>
<feature type="transmembrane region" description="Helical" evidence="1">
    <location>
        <begin position="50"/>
        <end position="70"/>
    </location>
</feature>
<feature type="transmembrane region" description="Helical" evidence="1">
    <location>
        <begin position="72"/>
        <end position="92"/>
    </location>
</feature>
<feature type="transmembrane region" description="Helical" evidence="1">
    <location>
        <begin position="118"/>
        <end position="138"/>
    </location>
</feature>
<feature type="transmembrane region" description="Helical" evidence="1">
    <location>
        <begin position="148"/>
        <end position="168"/>
    </location>
</feature>
<reference key="1">
    <citation type="submission" date="2008-01" db="EMBL/GenBank/DDBJ databases">
        <title>Complete sequence of Shewanella halifaxensis HAW-EB4.</title>
        <authorList>
            <consortium name="US DOE Joint Genome Institute"/>
            <person name="Copeland A."/>
            <person name="Lucas S."/>
            <person name="Lapidus A."/>
            <person name="Glavina del Rio T."/>
            <person name="Dalin E."/>
            <person name="Tice H."/>
            <person name="Bruce D."/>
            <person name="Goodwin L."/>
            <person name="Pitluck S."/>
            <person name="Sims D."/>
            <person name="Brettin T."/>
            <person name="Detter J.C."/>
            <person name="Han C."/>
            <person name="Kuske C.R."/>
            <person name="Schmutz J."/>
            <person name="Larimer F."/>
            <person name="Land M."/>
            <person name="Hauser L."/>
            <person name="Kyrpides N."/>
            <person name="Kim E."/>
            <person name="Zhao J.-S."/>
            <person name="Richardson P."/>
        </authorList>
    </citation>
    <scope>NUCLEOTIDE SEQUENCE [LARGE SCALE GENOMIC DNA]</scope>
    <source>
        <strain>HAW-EB4</strain>
    </source>
</reference>
<name>YCIB_SHEHH</name>
<comment type="function">
    <text evidence="1">Plays a role in cell envelope biogenesis, maintenance of cell envelope integrity and membrane homeostasis.</text>
</comment>
<comment type="subcellular location">
    <subcellularLocation>
        <location evidence="1">Cell inner membrane</location>
        <topology evidence="1">Multi-pass membrane protein</topology>
    </subcellularLocation>
</comment>
<comment type="similarity">
    <text evidence="1">Belongs to the YciB family.</text>
</comment>